<accession>Q96A09</accession>
<keyword id="KW-0963">Cytoplasm</keyword>
<keyword id="KW-0548">Nucleotidyltransferase</keyword>
<keyword id="KW-0539">Nucleus</keyword>
<keyword id="KW-1267">Proteomics identification</keyword>
<keyword id="KW-1185">Reference proteome</keyword>
<keyword id="KW-0808">Transferase</keyword>
<organism>
    <name type="scientific">Homo sapiens</name>
    <name type="common">Human</name>
    <dbReference type="NCBI Taxonomy" id="9606"/>
    <lineage>
        <taxon>Eukaryota</taxon>
        <taxon>Metazoa</taxon>
        <taxon>Chordata</taxon>
        <taxon>Craniata</taxon>
        <taxon>Vertebrata</taxon>
        <taxon>Euteleostomi</taxon>
        <taxon>Mammalia</taxon>
        <taxon>Eutheria</taxon>
        <taxon>Euarchontoglires</taxon>
        <taxon>Primates</taxon>
        <taxon>Haplorrhini</taxon>
        <taxon>Catarrhini</taxon>
        <taxon>Hominidae</taxon>
        <taxon>Homo</taxon>
    </lineage>
</organism>
<sequence length="425" mass="46688">MMPSESGAERRDRAAAQVGTAAATAVATAAPAGGGPDPEALSAFPGRHLSGLSWPQVKRLDALLSEPIPIHGRGNFPTLSVQPRQIVQVVRSTLEEQGLHVHSVRLHGSAASHVLHPESGLGYKDLDLVFRVDLRSEASFQLTKAVVLACLLDFLPAGVSRAKITPLTLKEAYVQKLVKVCTDSDRWSLISLSNKSGKNVELKFVDSVRRQFEFSIDSFQIILDSLLLFGQCSSTPMSEAFHPTVTGESLYGDFTEALEHLRHRVIATRSPEEIRGGGLLKYCHLLVRGFRPRPSTDVRALQRYMCSRFFIDFPDLVEQRRTLERYLEAHFGGADAARRYACLVTLHRVVNESTVCLMNHERRQTLDLIAALALQALAEQGPAATAALAWRPPGTDGVVPATVNYYVTPVQPLLAHAYPTWLPCN</sequence>
<gene>
    <name evidence="7" type="primary">TENT5B</name>
    <name evidence="7" type="synonym">FAM46B</name>
</gene>
<protein>
    <recommendedName>
        <fullName evidence="5">Terminal nucleotidyltransferase 5B</fullName>
        <ecNumber evidence="3 4">2.7.7.19</ecNumber>
    </recommendedName>
    <alternativeName>
        <fullName>Non-canonical poly(A) polymerase FAM46B</fullName>
    </alternativeName>
</protein>
<dbReference type="EC" id="2.7.7.19" evidence="3 4"/>
<dbReference type="EMBL" id="AL356390">
    <property type="status" value="NOT_ANNOTATED_CDS"/>
    <property type="molecule type" value="Genomic_DNA"/>
</dbReference>
<dbReference type="EMBL" id="BC012790">
    <property type="protein sequence ID" value="AAH12790.1"/>
    <property type="status" value="ALT_INIT"/>
    <property type="molecule type" value="mRNA"/>
</dbReference>
<dbReference type="EMBL" id="BC014160">
    <property type="protein sequence ID" value="AAH14160.1"/>
    <property type="status" value="ALT_INIT"/>
    <property type="molecule type" value="mRNA"/>
</dbReference>
<dbReference type="CCDS" id="CCDS294.2"/>
<dbReference type="RefSeq" id="NP_443175.2">
    <property type="nucleotide sequence ID" value="NM_052943.4"/>
</dbReference>
<dbReference type="SMR" id="Q96A09"/>
<dbReference type="BioGRID" id="125440">
    <property type="interactions" value="69"/>
</dbReference>
<dbReference type="FunCoup" id="Q96A09">
    <property type="interactions" value="1067"/>
</dbReference>
<dbReference type="IntAct" id="Q96A09">
    <property type="interactions" value="78"/>
</dbReference>
<dbReference type="STRING" id="9606.ENSP00000289166"/>
<dbReference type="GlyGen" id="Q96A09">
    <property type="glycosylation" value="2 sites, 1 O-linked glycan (1 site)"/>
</dbReference>
<dbReference type="iPTMnet" id="Q96A09"/>
<dbReference type="PhosphoSitePlus" id="Q96A09"/>
<dbReference type="BioMuta" id="FAM46B"/>
<dbReference type="DMDM" id="294862433"/>
<dbReference type="jPOST" id="Q96A09"/>
<dbReference type="MassIVE" id="Q96A09"/>
<dbReference type="PaxDb" id="9606-ENSP00000289166"/>
<dbReference type="PeptideAtlas" id="Q96A09"/>
<dbReference type="ProteomicsDB" id="75890"/>
<dbReference type="Antibodypedia" id="69553">
    <property type="antibodies" value="31 antibodies from 8 providers"/>
</dbReference>
<dbReference type="DNASU" id="115572"/>
<dbReference type="Ensembl" id="ENST00000289166.6">
    <property type="protein sequence ID" value="ENSP00000289166.5"/>
    <property type="gene ID" value="ENSG00000158246.8"/>
</dbReference>
<dbReference type="GeneID" id="115572"/>
<dbReference type="KEGG" id="hsa:115572"/>
<dbReference type="MANE-Select" id="ENST00000289166.6">
    <property type="protein sequence ID" value="ENSP00000289166.5"/>
    <property type="RefSeq nucleotide sequence ID" value="NM_052943.4"/>
    <property type="RefSeq protein sequence ID" value="NP_443175.2"/>
</dbReference>
<dbReference type="UCSC" id="uc010ofj.3">
    <property type="organism name" value="human"/>
</dbReference>
<dbReference type="AGR" id="HGNC:28273"/>
<dbReference type="CTD" id="115572"/>
<dbReference type="DisGeNET" id="115572"/>
<dbReference type="GeneCards" id="TENT5B"/>
<dbReference type="HGNC" id="HGNC:28273">
    <property type="gene designation" value="TENT5B"/>
</dbReference>
<dbReference type="HPA" id="ENSG00000158246">
    <property type="expression patterns" value="Tissue enhanced (esophagus, skin)"/>
</dbReference>
<dbReference type="MIM" id="619069">
    <property type="type" value="gene"/>
</dbReference>
<dbReference type="neXtProt" id="NX_Q96A09"/>
<dbReference type="OpenTargets" id="ENSG00000158246"/>
<dbReference type="PharmGKB" id="PA134962922"/>
<dbReference type="VEuPathDB" id="HostDB:ENSG00000158246"/>
<dbReference type="eggNOG" id="KOG3852">
    <property type="taxonomic scope" value="Eukaryota"/>
</dbReference>
<dbReference type="GeneTree" id="ENSGT00940000160747"/>
<dbReference type="HOGENOM" id="CLU_008115_2_0_1"/>
<dbReference type="InParanoid" id="Q96A09"/>
<dbReference type="OMA" id="CVHSVRL"/>
<dbReference type="OrthoDB" id="10065073at2759"/>
<dbReference type="PAN-GO" id="Q96A09">
    <property type="GO annotations" value="2 GO annotations based on evolutionary models"/>
</dbReference>
<dbReference type="PhylomeDB" id="Q96A09"/>
<dbReference type="TreeFam" id="TF315239"/>
<dbReference type="BRENDA" id="2.7.7.19">
    <property type="organism ID" value="2681"/>
</dbReference>
<dbReference type="PathwayCommons" id="Q96A09"/>
<dbReference type="SignaLink" id="Q96A09"/>
<dbReference type="BioGRID-ORCS" id="115572">
    <property type="hits" value="7 hits in 1156 CRISPR screens"/>
</dbReference>
<dbReference type="ChiTaRS" id="FAM46B">
    <property type="organism name" value="human"/>
</dbReference>
<dbReference type="GenomeRNAi" id="115572"/>
<dbReference type="Pharos" id="Q96A09">
    <property type="development level" value="Tdark"/>
</dbReference>
<dbReference type="PRO" id="PR:Q96A09"/>
<dbReference type="Proteomes" id="UP000005640">
    <property type="component" value="Chromosome 1"/>
</dbReference>
<dbReference type="RNAct" id="Q96A09">
    <property type="molecule type" value="protein"/>
</dbReference>
<dbReference type="Bgee" id="ENSG00000158246">
    <property type="expression patterns" value="Expressed in skin of leg and 116 other cell types or tissues"/>
</dbReference>
<dbReference type="GO" id="GO:0005737">
    <property type="term" value="C:cytoplasm"/>
    <property type="evidence" value="ECO:0000314"/>
    <property type="project" value="UniProtKB"/>
</dbReference>
<dbReference type="GO" id="GO:0005634">
    <property type="term" value="C:nucleus"/>
    <property type="evidence" value="ECO:0000314"/>
    <property type="project" value="UniProtKB"/>
</dbReference>
<dbReference type="GO" id="GO:1990817">
    <property type="term" value="F:poly(A) RNA polymerase activity"/>
    <property type="evidence" value="ECO:0000314"/>
    <property type="project" value="UniProtKB"/>
</dbReference>
<dbReference type="GO" id="GO:0048255">
    <property type="term" value="P:mRNA stabilization"/>
    <property type="evidence" value="ECO:0000318"/>
    <property type="project" value="GO_Central"/>
</dbReference>
<dbReference type="GO" id="GO:0043066">
    <property type="term" value="P:negative regulation of apoptotic process"/>
    <property type="evidence" value="ECO:0000315"/>
    <property type="project" value="UniProtKB"/>
</dbReference>
<dbReference type="GO" id="GO:0045786">
    <property type="term" value="P:negative regulation of cell cycle"/>
    <property type="evidence" value="ECO:0000315"/>
    <property type="project" value="UniProtKB"/>
</dbReference>
<dbReference type="GO" id="GO:0008285">
    <property type="term" value="P:negative regulation of cell population proliferation"/>
    <property type="evidence" value="ECO:0000315"/>
    <property type="project" value="UniProtKB"/>
</dbReference>
<dbReference type="GO" id="GO:0045727">
    <property type="term" value="P:positive regulation of translation"/>
    <property type="evidence" value="ECO:0000315"/>
    <property type="project" value="UniProtKB"/>
</dbReference>
<dbReference type="InterPro" id="IPR012937">
    <property type="entry name" value="TET5"/>
</dbReference>
<dbReference type="PANTHER" id="PTHR12974">
    <property type="entry name" value="PRION-LIKE- Q/N-RICH -DOMAIN-BEARING PROTEIN PROTEIN 44"/>
    <property type="match status" value="1"/>
</dbReference>
<dbReference type="PANTHER" id="PTHR12974:SF46">
    <property type="entry name" value="TERMINAL NUCLEOTIDYLTRANSFERASE 5B"/>
    <property type="match status" value="1"/>
</dbReference>
<dbReference type="Pfam" id="PF07984">
    <property type="entry name" value="NTP_transf_7"/>
    <property type="match status" value="1"/>
</dbReference>
<dbReference type="SMART" id="SM01153">
    <property type="entry name" value="DUF1693"/>
    <property type="match status" value="1"/>
</dbReference>
<feature type="chain" id="PRO_0000259931" description="Terminal nucleotidyltransferase 5B">
    <location>
        <begin position="1"/>
        <end position="425"/>
    </location>
</feature>
<feature type="region of interest" description="Disordered" evidence="1">
    <location>
        <begin position="1"/>
        <end position="42"/>
    </location>
</feature>
<feature type="compositionally biased region" description="Low complexity" evidence="1">
    <location>
        <begin position="15"/>
        <end position="31"/>
    </location>
</feature>
<feature type="mutagenesis site" description="Loss of polyadenylation activity." evidence="3">
    <original>G</original>
    <variation>A</variation>
    <location>
        <position position="108"/>
    </location>
</feature>
<feature type="mutagenesis site" description="Loss of polyadenylation activity." evidence="3">
    <original>S</original>
    <variation>A</variation>
    <location>
        <position position="109"/>
    </location>
</feature>
<feature type="mutagenesis site" description="Does not affect polyadenylation activity." evidence="3">
    <original>K</original>
    <variation>A</variation>
    <location>
        <position position="124"/>
    </location>
</feature>
<feature type="mutagenesis site" description="Loss of polyadenylation activity." evidence="3">
    <original>D</original>
    <variation>A</variation>
    <location>
        <position position="125"/>
    </location>
</feature>
<feature type="mutagenesis site" description="Loss of polyadenylation activity." evidence="3">
    <original>D</original>
    <variation>A</variation>
    <location>
        <position position="127"/>
    </location>
</feature>
<feature type="mutagenesis site" description="Loss of polyadenylation activity." evidence="3">
    <original>K</original>
    <variation>A</variation>
    <location>
        <position position="176"/>
    </location>
</feature>
<feature type="mutagenesis site" description="Loss of polyadenylation activity." evidence="3">
    <original>K</original>
    <variation>A</variation>
    <location>
        <position position="179"/>
    </location>
</feature>
<feature type="mutagenesis site" description="Reduces polyadenylation activity." evidence="3">
    <original>C</original>
    <variation>A</variation>
    <location>
        <position position="181"/>
    </location>
</feature>
<feature type="mutagenesis site" description="Loss of polyadenylation activity." evidence="3">
    <original>E</original>
    <variation>A</variation>
    <location>
        <position position="201"/>
    </location>
</feature>
<feature type="mutagenesis site" description="Loss of polyadenylation activity." evidence="3">
    <original>K</original>
    <variation>A</variation>
    <location>
        <position position="203"/>
    </location>
</feature>
<feature type="mutagenesis site" description="Loss of polyadenylation activity." evidence="3">
    <original>R</original>
    <variation>A</variation>
    <location>
        <position position="210"/>
    </location>
</feature>
<feature type="mutagenesis site" description="Substantially reduces polyadenylation activity." evidence="3">
    <original>E</original>
    <variation>A</variation>
    <location>
        <position position="213"/>
    </location>
</feature>
<feature type="mutagenesis site" description="Substantially reduces polyadenylation activity." evidence="3">
    <original>I</original>
    <variation>S</variation>
    <location>
        <position position="216"/>
    </location>
</feature>
<feature type="mutagenesis site" description="Substantially reduces polyadenylation activity." evidence="3">
    <original>R</original>
    <variation>A</variation>
    <location>
        <position position="269"/>
    </location>
</feature>
<feature type="mutagenesis site" description="Substantially reduces polyadenylation activity." evidence="3">
    <original>E</original>
    <variation>A</variation>
    <location>
        <position position="272"/>
    </location>
</feature>
<feature type="mutagenesis site" description="Loss of polyadenylation activity." evidence="3">
    <original>R</original>
    <variation>A</variation>
    <location>
        <position position="275"/>
    </location>
</feature>
<feature type="mutagenesis site" description="Loss of polyadenylation activity." evidence="3">
    <original>K</original>
    <variation>A</variation>
    <location>
        <position position="281"/>
    </location>
</feature>
<feature type="mutagenesis site" description="Does not affect polyadenylation activity." evidence="3">
    <original>R</original>
    <variation>A</variation>
    <location>
        <position position="303"/>
    </location>
</feature>
<feature type="mutagenesis site" description="Loss of polyadenylation activity." evidence="3">
    <original>R</original>
    <variation>A</variation>
    <location>
        <position position="321"/>
    </location>
</feature>
<feature type="mutagenesis site" description="Loss of polyadenylation activity." evidence="3">
    <original>H</original>
    <variation>A</variation>
    <location>
        <position position="330"/>
    </location>
</feature>
<feature type="mutagenesis site" description="Does not affect polyadenylation activity." evidence="3">
    <original>F</original>
    <variation>A</variation>
    <location>
        <position position="331"/>
    </location>
</feature>
<comment type="function">
    <text evidence="2 3 4">Catalyzes the transfer of one adenosine molecule from an ATP to an mRNA poly(A) tail bearing a 3'-OH terminal group in an ATP hydrolysis-dependent manner (PubMed:32009146, PubMed:34048638). May be involved in maintaining the translation efficiency of at least some genes through preventing degradation of their mRNAs (PubMed:32009146). Prefers RNA molecules that are adenosine-rich close to 3'-end (PubMed:32009146). In addition, may inhibit cell proliferation and cell cycle progression through ubiquitination of beta-catenin/CTNNB1 (PubMed:30532005).</text>
</comment>
<comment type="catalytic activity">
    <reaction evidence="3 4">
        <text>RNA(n) + ATP = RNA(n)-3'-adenine ribonucleotide + diphosphate</text>
        <dbReference type="Rhea" id="RHEA:11332"/>
        <dbReference type="Rhea" id="RHEA-COMP:14527"/>
        <dbReference type="Rhea" id="RHEA-COMP:17347"/>
        <dbReference type="ChEBI" id="CHEBI:30616"/>
        <dbReference type="ChEBI" id="CHEBI:33019"/>
        <dbReference type="ChEBI" id="CHEBI:140395"/>
        <dbReference type="ChEBI" id="CHEBI:173115"/>
        <dbReference type="EC" id="2.7.7.19"/>
    </reaction>
    <physiologicalReaction direction="left-to-right" evidence="6">
        <dbReference type="Rhea" id="RHEA:11333"/>
    </physiologicalReaction>
</comment>
<comment type="interaction">
    <interactant intactId="EBI-752030">
        <id>Q96A09</id>
    </interactant>
    <interactant intactId="EBI-742064">
        <id>Q03154</id>
        <label>ACY1</label>
    </interactant>
    <organismsDiffer>false</organismsDiffer>
    <experiments>3</experiments>
</comment>
<comment type="interaction">
    <interactant intactId="EBI-752030">
        <id>Q96A09</id>
    </interactant>
    <interactant intactId="EBI-357530">
        <id>Q9ULX6</id>
        <label>AKAP8L</label>
    </interactant>
    <organismsDiffer>false</organismsDiffer>
    <experiments>3</experiments>
</comment>
<comment type="interaction">
    <interactant intactId="EBI-752030">
        <id>Q96A09</id>
    </interactant>
    <interactant intactId="EBI-11745576">
        <id>Q6PJH3</id>
        <label>AKAP9</label>
    </interactant>
    <organismsDiffer>false</organismsDiffer>
    <experiments>3</experiments>
</comment>
<comment type="interaction">
    <interactant intactId="EBI-752030">
        <id>Q96A09</id>
    </interactant>
    <interactant intactId="EBI-11954292">
        <id>Q86V38</id>
        <label>ATN1</label>
    </interactant>
    <organismsDiffer>false</organismsDiffer>
    <experiments>3</experiments>
</comment>
<comment type="interaction">
    <interactant intactId="EBI-752030">
        <id>Q96A09</id>
    </interactant>
    <interactant intactId="EBI-930964">
        <id>P54253</id>
        <label>ATXN1</label>
    </interactant>
    <organismsDiffer>false</organismsDiffer>
    <experiments>11</experiments>
</comment>
<comment type="interaction">
    <interactant intactId="EBI-752030">
        <id>Q96A09</id>
    </interactant>
    <interactant intactId="EBI-711810">
        <id>O14503</id>
        <label>BHLHE40</label>
    </interactant>
    <organismsDiffer>false</organismsDiffer>
    <experiments>3</experiments>
</comment>
<comment type="interaction">
    <interactant intactId="EBI-752030">
        <id>Q96A09</id>
    </interactant>
    <interactant intactId="EBI-12809220">
        <id>Q5SWW7</id>
        <label>C10orf55</label>
    </interactant>
    <organismsDiffer>false</organismsDiffer>
    <experiments>5</experiments>
</comment>
<comment type="interaction">
    <interactant intactId="EBI-752030">
        <id>Q96A09</id>
    </interactant>
    <interactant intactId="EBI-18036948">
        <id>Q3SXR2</id>
        <label>C3orf36</label>
    </interactant>
    <organismsDiffer>false</organismsDiffer>
    <experiments>3</experiments>
</comment>
<comment type="interaction">
    <interactant intactId="EBI-752030">
        <id>Q96A09</id>
    </interactant>
    <interactant intactId="EBI-718729">
        <id>P55212</id>
        <label>CASP6</label>
    </interactant>
    <organismsDiffer>false</organismsDiffer>
    <experiments>3</experiments>
</comment>
<comment type="interaction">
    <interactant intactId="EBI-752030">
        <id>Q96A09</id>
    </interactant>
    <interactant intactId="EBI-12261896">
        <id>Q5T4B2</id>
        <label>CERCAM</label>
    </interactant>
    <organismsDiffer>false</organismsDiffer>
    <experiments>3</experiments>
</comment>
<comment type="interaction">
    <interactant intactId="EBI-752030">
        <id>Q96A09</id>
    </interactant>
    <interactant intactId="EBI-25837549">
        <id>P28329-3</id>
        <label>CHAT</label>
    </interactant>
    <organismsDiffer>false</organismsDiffer>
    <experiments>3</experiments>
</comment>
<comment type="interaction">
    <interactant intactId="EBI-752030">
        <id>Q96A09</id>
    </interactant>
    <interactant intactId="EBI-12160437">
        <id>A8MTA8-2</id>
        <label>CIMIP2B</label>
    </interactant>
    <organismsDiffer>false</organismsDiffer>
    <experiments>3</experiments>
</comment>
<comment type="interaction">
    <interactant intactId="EBI-752030">
        <id>Q96A09</id>
    </interactant>
    <interactant intactId="EBI-6875961">
        <id>P02489</id>
        <label>CRYAA</label>
    </interactant>
    <organismsDiffer>false</organismsDiffer>
    <experiments>3</experiments>
</comment>
<comment type="interaction">
    <interactant intactId="EBI-752030">
        <id>Q96A09</id>
    </interactant>
    <interactant intactId="EBI-3867333">
        <id>A8MQ03</id>
        <label>CYSRT1</label>
    </interactant>
    <organismsDiffer>false</organismsDiffer>
    <experiments>3</experiments>
</comment>
<comment type="interaction">
    <interactant intactId="EBI-752030">
        <id>Q96A09</id>
    </interactant>
    <interactant intactId="EBI-724310">
        <id>Q15038</id>
        <label>DAZAP2</label>
    </interactant>
    <organismsDiffer>false</organismsDiffer>
    <experiments>7</experiments>
</comment>
<comment type="interaction">
    <interactant intactId="EBI-752030">
        <id>Q96A09</id>
    </interactant>
    <interactant intactId="EBI-744099">
        <id>Q9H0I2</id>
        <label>ENKD1</label>
    </interactant>
    <organismsDiffer>false</organismsDiffer>
    <experiments>3</experiments>
</comment>
<comment type="interaction">
    <interactant intactId="EBI-752030">
        <id>Q96A09</id>
    </interactant>
    <interactant intactId="EBI-12193763">
        <id>A1KXE4-2</id>
        <label>FAM168B</label>
    </interactant>
    <organismsDiffer>false</organismsDiffer>
    <experiments>3</experiments>
</comment>
<comment type="interaction">
    <interactant intactId="EBI-752030">
        <id>Q96A09</id>
    </interactant>
    <interactant intactId="EBI-348399">
        <id>P22607</id>
        <label>FGFR3</label>
    </interactant>
    <organismsDiffer>false</organismsDiffer>
    <experiments>3</experiments>
</comment>
<comment type="interaction">
    <interactant intactId="EBI-752030">
        <id>Q96A09</id>
    </interactant>
    <interactant intactId="EBI-852851">
        <id>P01100</id>
        <label>FOS</label>
    </interactant>
    <organismsDiffer>false</organismsDiffer>
    <experiments>3</experiments>
</comment>
<comment type="interaction">
    <interactant intactId="EBI-752030">
        <id>Q96A09</id>
    </interactant>
    <interactant intactId="EBI-2806743">
        <id>P53539</id>
        <label>FOSB</label>
    </interactant>
    <organismsDiffer>false</organismsDiffer>
    <experiments>5</experiments>
</comment>
<comment type="interaction">
    <interactant intactId="EBI-752030">
        <id>Q96A09</id>
    </interactant>
    <interactant intactId="EBI-12018822">
        <id>Q12951-2</id>
        <label>FOXI1</label>
    </interactant>
    <organismsDiffer>false</organismsDiffer>
    <experiments>3</experiments>
</comment>
<comment type="interaction">
    <interactant intactId="EBI-752030">
        <id>Q96A09</id>
    </interactant>
    <interactant intactId="EBI-351506">
        <id>P06396</id>
        <label>GSN</label>
    </interactant>
    <organismsDiffer>false</organismsDiffer>
    <experiments>3</experiments>
</comment>
<comment type="interaction">
    <interactant intactId="EBI-752030">
        <id>Q96A09</id>
    </interactant>
    <interactant intactId="EBI-473886">
        <id>O00291</id>
        <label>HIP1</label>
    </interactant>
    <organismsDiffer>false</organismsDiffer>
    <experiments>3</experiments>
</comment>
<comment type="interaction">
    <interactant intactId="EBI-752030">
        <id>Q96A09</id>
    </interactant>
    <interactant intactId="EBI-7261162">
        <id>Q9UGU5</id>
        <label>HMGXB4</label>
    </interactant>
    <organismsDiffer>false</organismsDiffer>
    <experiments>3</experiments>
</comment>
<comment type="interaction">
    <interactant intactId="EBI-752030">
        <id>Q96A09</id>
    </interactant>
    <interactant intactId="EBI-352986">
        <id>P52597</id>
        <label>HNRNPF</label>
    </interactant>
    <organismsDiffer>false</organismsDiffer>
    <experiments>3</experiments>
</comment>
<comment type="interaction">
    <interactant intactId="EBI-752030">
        <id>Q96A09</id>
    </interactant>
    <interactant intactId="EBI-352682">
        <id>P04792</id>
        <label>HSPB1</label>
    </interactant>
    <organismsDiffer>false</organismsDiffer>
    <experiments>3</experiments>
</comment>
<comment type="interaction">
    <interactant intactId="EBI-752030">
        <id>Q96A09</id>
    </interactant>
    <interactant intactId="EBI-466029">
        <id>P42858</id>
        <label>HTT</label>
    </interactant>
    <organismsDiffer>false</organismsDiffer>
    <experiments>6</experiments>
</comment>
<comment type="interaction">
    <interactant intactId="EBI-752030">
        <id>Q96A09</id>
    </interactant>
    <interactant intactId="EBI-10975473">
        <id>O60333-2</id>
        <label>KIF1B</label>
    </interactant>
    <organismsDiffer>false</organismsDiffer>
    <experiments>3</experiments>
</comment>
<comment type="interaction">
    <interactant intactId="EBI-752030">
        <id>Q96A09</id>
    </interactant>
    <interactant intactId="EBI-6426443">
        <id>Q2WGJ6</id>
        <label>KLHL38</label>
    </interactant>
    <organismsDiffer>false</organismsDiffer>
    <experiments>3</experiments>
</comment>
<comment type="interaction">
    <interactant intactId="EBI-752030">
        <id>Q96A09</id>
    </interactant>
    <interactant intactId="EBI-2432309">
        <id>Q92876</id>
        <label>KLK6</label>
    </interactant>
    <organismsDiffer>false</organismsDiffer>
    <experiments>3</experiments>
</comment>
<comment type="interaction">
    <interactant intactId="EBI-752030">
        <id>Q96A09</id>
    </interactant>
    <interactant intactId="EBI-1047093">
        <id>O76011</id>
        <label>KRT34</label>
    </interactant>
    <organismsDiffer>false</organismsDiffer>
    <experiments>3</experiments>
</comment>
<comment type="interaction">
    <interactant intactId="EBI-752030">
        <id>Q96A09</id>
    </interactant>
    <interactant intactId="EBI-12805508">
        <id>Q3LI70</id>
        <label>KRTAP19-6</label>
    </interactant>
    <organismsDiffer>false</organismsDiffer>
    <experiments>3</experiments>
</comment>
<comment type="interaction">
    <interactant intactId="EBI-752030">
        <id>Q96A09</id>
    </interactant>
    <interactant intactId="EBI-12111050">
        <id>Q3LI64</id>
        <label>KRTAP6-1</label>
    </interactant>
    <organismsDiffer>false</organismsDiffer>
    <experiments>3</experiments>
</comment>
<comment type="interaction">
    <interactant intactId="EBI-752030">
        <id>Q96A09</id>
    </interactant>
    <interactant intactId="EBI-11962084">
        <id>Q3LI66</id>
        <label>KRTAP6-2</label>
    </interactant>
    <organismsDiffer>false</organismsDiffer>
    <experiments>3</experiments>
</comment>
<comment type="interaction">
    <interactant intactId="EBI-752030">
        <id>Q96A09</id>
    </interactant>
    <interactant intactId="EBI-2340269">
        <id>Q13064</id>
        <label>MKRN3</label>
    </interactant>
    <organismsDiffer>false</organismsDiffer>
    <experiments>3</experiments>
</comment>
<comment type="interaction">
    <interactant intactId="EBI-752030">
        <id>Q96A09</id>
    </interactant>
    <interactant intactId="EBI-2515597">
        <id>Q96HR8</id>
        <label>NAF1</label>
    </interactant>
    <organismsDiffer>false</organismsDiffer>
    <experiments>3</experiments>
</comment>
<comment type="interaction">
    <interactant intactId="EBI-752030">
        <id>Q96A09</id>
    </interactant>
    <interactant intactId="EBI-13324229">
        <id>Q9BSH3</id>
        <label>NICN1</label>
    </interactant>
    <organismsDiffer>false</organismsDiffer>
    <experiments>3</experiments>
</comment>
<comment type="interaction">
    <interactant intactId="EBI-752030">
        <id>Q96A09</id>
    </interactant>
    <interactant intactId="EBI-10250949">
        <id>Q6NSM0</id>
        <label>NR1D2</label>
    </interactant>
    <organismsDiffer>false</organismsDiffer>
    <experiments>3</experiments>
</comment>
<comment type="interaction">
    <interactant intactId="EBI-752030">
        <id>Q96A09</id>
    </interactant>
    <interactant intactId="EBI-9087860">
        <id>P32243-2</id>
        <label>OTX2</label>
    </interactant>
    <organismsDiffer>false</organismsDiffer>
    <experiments>3</experiments>
</comment>
<comment type="interaction">
    <interactant intactId="EBI-752030">
        <id>Q96A09</id>
    </interactant>
    <interactant intactId="EBI-746202">
        <id>O00444</id>
        <label>PLK4</label>
    </interactant>
    <organismsDiffer>false</organismsDiffer>
    <experiments>3</experiments>
</comment>
<comment type="interaction">
    <interactant intactId="EBI-752030">
        <id>Q96A09</id>
    </interactant>
    <interactant intactId="EBI-943588">
        <id>Q16633</id>
        <label>POU2AF1</label>
    </interactant>
    <organismsDiffer>false</organismsDiffer>
    <experiments>3</experiments>
</comment>
<comment type="interaction">
    <interactant intactId="EBI-752030">
        <id>Q96A09</id>
    </interactant>
    <interactant intactId="EBI-12029004">
        <id>P78424</id>
        <label>POU6F2</label>
    </interactant>
    <organismsDiffer>false</organismsDiffer>
    <experiments>3</experiments>
</comment>
<comment type="interaction">
    <interactant intactId="EBI-752030">
        <id>Q96A09</id>
    </interactant>
    <interactant intactId="EBI-9027467">
        <id>O75360</id>
        <label>PROP1</label>
    </interactant>
    <organismsDiffer>false</organismsDiffer>
    <experiments>3</experiments>
</comment>
<comment type="interaction">
    <interactant intactId="EBI-752030">
        <id>Q96A09</id>
    </interactant>
    <interactant intactId="EBI-749195">
        <id>P60891</id>
        <label>PRPS1</label>
    </interactant>
    <organismsDiffer>false</organismsDiffer>
    <experiments>3</experiments>
</comment>
<comment type="interaction">
    <interactant intactId="EBI-752030">
        <id>Q96A09</id>
    </interactant>
    <interactant intactId="EBI-372312">
        <id>P28062-2</id>
        <label>PSMB8</label>
    </interactant>
    <organismsDiffer>false</organismsDiffer>
    <experiments>3</experiments>
</comment>
<comment type="interaction">
    <interactant intactId="EBI-752030">
        <id>Q96A09</id>
    </interactant>
    <interactant intactId="EBI-945916">
        <id>Q92530</id>
        <label>PSMF1</label>
    </interactant>
    <organismsDiffer>false</organismsDiffer>
    <experiments>3</experiments>
</comment>
<comment type="interaction">
    <interactant intactId="EBI-752030">
        <id>Q96A09</id>
    </interactant>
    <interactant intactId="EBI-286642">
        <id>P62826</id>
        <label>RAN</label>
    </interactant>
    <organismsDiffer>false</organismsDiffer>
    <experiments>3</experiments>
</comment>
<comment type="interaction">
    <interactant intactId="EBI-752030">
        <id>Q96A09</id>
    </interactant>
    <interactant intactId="EBI-11987469">
        <id>Q6ZRY4</id>
        <label>RBPMS2</label>
    </interactant>
    <organismsDiffer>false</organismsDiffer>
    <experiments>3</experiments>
</comment>
<comment type="interaction">
    <interactant intactId="EBI-752030">
        <id>Q96A09</id>
    </interactant>
    <interactant intactId="EBI-746118">
        <id>Q8HWS3</id>
        <label>RFX6</label>
    </interactant>
    <organismsDiffer>false</organismsDiffer>
    <experiments>3</experiments>
</comment>
<comment type="interaction">
    <interactant intactId="EBI-752030">
        <id>Q96A09</id>
    </interactant>
    <interactant intactId="EBI-372094">
        <id>Q9BQY4</id>
        <label>RHOXF2</label>
    </interactant>
    <organismsDiffer>false</organismsDiffer>
    <experiments>4</experiments>
</comment>
<comment type="interaction">
    <interactant intactId="EBI-752030">
        <id>Q96A09</id>
    </interactant>
    <interactant intactId="EBI-10182375">
        <id>Q9UFD9</id>
        <label>RIMBP3</label>
    </interactant>
    <organismsDiffer>false</organismsDiffer>
    <experiments>3</experiments>
</comment>
<comment type="interaction">
    <interactant intactId="EBI-752030">
        <id>Q96A09</id>
    </interactant>
    <interactant intactId="EBI-396669">
        <id>Q9Y3C5</id>
        <label>RNF11</label>
    </interactant>
    <organismsDiffer>false</organismsDiffer>
    <experiments>3</experiments>
</comment>
<comment type="interaction">
    <interactant intactId="EBI-752030">
        <id>Q96A09</id>
    </interactant>
    <interactant intactId="EBI-6257312">
        <id>Q9BVN2</id>
        <label>RUSC1</label>
    </interactant>
    <organismsDiffer>false</organismsDiffer>
    <experiments>3</experiments>
</comment>
<comment type="interaction">
    <interactant intactId="EBI-752030">
        <id>Q96A09</id>
    </interactant>
    <interactant intactId="EBI-490630">
        <id>Q9NP31</id>
        <label>SH2D2A</label>
    </interactant>
    <organismsDiffer>false</organismsDiffer>
    <experiments>3</experiments>
</comment>
<comment type="interaction">
    <interactant intactId="EBI-752030">
        <id>Q96A09</id>
    </interactant>
    <interactant intactId="EBI-12806032">
        <id>Q16348</id>
        <label>SLC15A2</label>
    </interactant>
    <organismsDiffer>false</organismsDiffer>
    <experiments>3</experiments>
</comment>
<comment type="interaction">
    <interactant intactId="EBI-752030">
        <id>Q96A09</id>
    </interactant>
    <interactant intactId="EBI-12898981">
        <id>Q6P1M0-2</id>
        <label>SLC27A4</label>
    </interactant>
    <organismsDiffer>false</organismsDiffer>
    <experiments>3</experiments>
</comment>
<comment type="interaction">
    <interactant intactId="EBI-752030">
        <id>Q96A09</id>
    </interactant>
    <interactant intactId="EBI-2822515">
        <id>Q8WU79</id>
        <label>SMAP2</label>
    </interactant>
    <organismsDiffer>false</organismsDiffer>
    <experiments>3</experiments>
</comment>
<comment type="interaction">
    <interactant intactId="EBI-752030">
        <id>Q96A09</id>
    </interactant>
    <interactant intactId="EBI-12288855">
        <id>Q5JUK2</id>
        <label>SOHLH1</label>
    </interactant>
    <organismsDiffer>false</organismsDiffer>
    <experiments>3</experiments>
</comment>
<comment type="interaction">
    <interactant intactId="EBI-752030">
        <id>Q96A09</id>
    </interactant>
    <interactant intactId="EBI-3505701">
        <id>P35711</id>
        <label>SOX5</label>
    </interactant>
    <organismsDiffer>false</organismsDiffer>
    <experiments>3</experiments>
</comment>
<comment type="interaction">
    <interactant intactId="EBI-752030">
        <id>Q96A09</id>
    </interactant>
    <interactant intactId="EBI-11959123">
        <id>Q99932-2</id>
        <label>SPAG8</label>
    </interactant>
    <organismsDiffer>false</organismsDiffer>
    <experiments>3</experiments>
</comment>
<comment type="interaction">
    <interactant intactId="EBI-752030">
        <id>Q96A09</id>
    </interactant>
    <interactant intactId="EBI-2824328">
        <id>O95947</id>
        <label>TBX6</label>
    </interactant>
    <organismsDiffer>false</organismsDiffer>
    <experiments>3</experiments>
</comment>
<comment type="interaction">
    <interactant intactId="EBI-752030">
        <id>Q96A09</id>
    </interactant>
    <interactant intactId="EBI-11741437">
        <id>Q08117-2</id>
        <label>TLE5</label>
    </interactant>
    <organismsDiffer>false</organismsDiffer>
    <experiments>6</experiments>
</comment>
<comment type="interaction">
    <interactant intactId="EBI-752030">
        <id>Q96A09</id>
    </interactant>
    <interactant intactId="EBI-949753">
        <id>Q63HR2</id>
        <label>TNS2</label>
    </interactant>
    <organismsDiffer>false</organismsDiffer>
    <experiments>3</experiments>
</comment>
<comment type="interaction">
    <interactant intactId="EBI-752030">
        <id>Q96A09</id>
    </interactant>
    <interactant intactId="EBI-358993">
        <id>Q15645</id>
        <label>TRIP13</label>
    </interactant>
    <organismsDiffer>false</organismsDiffer>
    <experiments>3</experiments>
</comment>
<comment type="interaction">
    <interactant intactId="EBI-752030">
        <id>Q96A09</id>
    </interactant>
    <interactant intactId="EBI-2514383">
        <id>Q5T6F2</id>
        <label>UBAP2</label>
    </interactant>
    <organismsDiffer>false</organismsDiffer>
    <experiments>3</experiments>
</comment>
<comment type="interaction">
    <interactant intactId="EBI-752030">
        <id>Q96A09</id>
    </interactant>
    <interactant intactId="EBI-947187">
        <id>Q9UHD9</id>
        <label>UBQLN2</label>
    </interactant>
    <organismsDiffer>false</organismsDiffer>
    <experiments>3</experiments>
</comment>
<comment type="interaction">
    <interactant intactId="EBI-752030">
        <id>Q96A09</id>
    </interactant>
    <interactant intactId="EBI-11975223">
        <id>Q70EL1-9</id>
        <label>USP54</label>
    </interactant>
    <organismsDiffer>false</organismsDiffer>
    <experiments>3</experiments>
</comment>
<comment type="interaction">
    <interactant intactId="EBI-752030">
        <id>Q96A09</id>
    </interactant>
    <interactant intactId="EBI-720609">
        <id>O76024</id>
        <label>WFS1</label>
    </interactant>
    <organismsDiffer>false</organismsDiffer>
    <experiments>3</experiments>
</comment>
<comment type="interaction">
    <interactant intactId="EBI-752030">
        <id>Q96A09</id>
    </interactant>
    <interactant intactId="EBI-2515601">
        <id>Q8N680</id>
        <label>ZBTB2</label>
    </interactant>
    <organismsDiffer>false</organismsDiffer>
    <experiments>3</experiments>
</comment>
<comment type="interaction">
    <interactant intactId="EBI-752030">
        <id>Q96A09</id>
    </interactant>
    <interactant intactId="EBI-742550">
        <id>Q96K80</id>
        <label>ZC3H10</label>
    </interactant>
    <organismsDiffer>false</organismsDiffer>
    <experiments>3</experiments>
</comment>
<comment type="interaction">
    <interactant intactId="EBI-752030">
        <id>Q96A09</id>
    </interactant>
    <interactant intactId="EBI-8832437">
        <id>Q96F45</id>
        <label>ZNF503</label>
    </interactant>
    <organismsDiffer>false</organismsDiffer>
    <experiments>3</experiments>
</comment>
<comment type="interaction">
    <interactant intactId="EBI-752030">
        <id>Q96A09</id>
    </interactant>
    <interactant intactId="EBI-4395669">
        <id>Q6ZNG0</id>
        <label>ZNF620</label>
    </interactant>
    <organismsDiffer>false</organismsDiffer>
    <experiments>3</experiments>
</comment>
<comment type="interaction">
    <interactant intactId="EBI-752030">
        <id>Q96A09</id>
    </interactant>
    <interactant intactId="EBI-4395732">
        <id>P0C7X2</id>
        <label>ZNF688</label>
    </interactant>
    <organismsDiffer>false</organismsDiffer>
    <experiments>3</experiments>
</comment>
<comment type="interaction">
    <interactant intactId="EBI-752030">
        <id>Q96A09</id>
    </interactant>
    <interactant intactId="EBI-25900580">
        <id>Q9Y649</id>
    </interactant>
    <organismsDiffer>false</organismsDiffer>
    <experiments>3</experiments>
</comment>
<comment type="subcellular location">
    <subcellularLocation>
        <location evidence="3">Cytoplasm</location>
    </subcellularLocation>
    <subcellularLocation>
        <location evidence="3">Nucleus</location>
    </subcellularLocation>
</comment>
<comment type="developmental stage">
    <text evidence="3">Uniquely and highly expressed in pre-implantation embryos and pluripotent stem cells, but sharply down-regulated following differentiation.</text>
</comment>
<comment type="similarity">
    <text evidence="5">Belongs to the TENT family.</text>
</comment>
<comment type="caution">
    <text evidence="5">It is uncertain whether Met-1 or Met-2 is the initiator.</text>
</comment>
<comment type="sequence caution" evidence="5">
    <conflict type="erroneous initiation">
        <sequence resource="EMBL-CDS" id="AAH12790"/>
    </conflict>
    <text>Truncated N-terminus.</text>
</comment>
<comment type="sequence caution" evidence="5">
    <conflict type="erroneous initiation">
        <sequence resource="EMBL-CDS" id="AAH14160"/>
    </conflict>
    <text>Truncated N-terminus.</text>
</comment>
<reference key="1">
    <citation type="journal article" date="2006" name="Nature">
        <title>The DNA sequence and biological annotation of human chromosome 1.</title>
        <authorList>
            <person name="Gregory S.G."/>
            <person name="Barlow K.F."/>
            <person name="McLay K.E."/>
            <person name="Kaul R."/>
            <person name="Swarbreck D."/>
            <person name="Dunham A."/>
            <person name="Scott C.E."/>
            <person name="Howe K.L."/>
            <person name="Woodfine K."/>
            <person name="Spencer C.C.A."/>
            <person name="Jones M.C."/>
            <person name="Gillson C."/>
            <person name="Searle S."/>
            <person name="Zhou Y."/>
            <person name="Kokocinski F."/>
            <person name="McDonald L."/>
            <person name="Evans R."/>
            <person name="Phillips K."/>
            <person name="Atkinson A."/>
            <person name="Cooper R."/>
            <person name="Jones C."/>
            <person name="Hall R.E."/>
            <person name="Andrews T.D."/>
            <person name="Lloyd C."/>
            <person name="Ainscough R."/>
            <person name="Almeida J.P."/>
            <person name="Ambrose K.D."/>
            <person name="Anderson F."/>
            <person name="Andrew R.W."/>
            <person name="Ashwell R.I.S."/>
            <person name="Aubin K."/>
            <person name="Babbage A.K."/>
            <person name="Bagguley C.L."/>
            <person name="Bailey J."/>
            <person name="Beasley H."/>
            <person name="Bethel G."/>
            <person name="Bird C.P."/>
            <person name="Bray-Allen S."/>
            <person name="Brown J.Y."/>
            <person name="Brown A.J."/>
            <person name="Buckley D."/>
            <person name="Burton J."/>
            <person name="Bye J."/>
            <person name="Carder C."/>
            <person name="Chapman J.C."/>
            <person name="Clark S.Y."/>
            <person name="Clarke G."/>
            <person name="Clee C."/>
            <person name="Cobley V."/>
            <person name="Collier R.E."/>
            <person name="Corby N."/>
            <person name="Coville G.J."/>
            <person name="Davies J."/>
            <person name="Deadman R."/>
            <person name="Dunn M."/>
            <person name="Earthrowl M."/>
            <person name="Ellington A.G."/>
            <person name="Errington H."/>
            <person name="Frankish A."/>
            <person name="Frankland J."/>
            <person name="French L."/>
            <person name="Garner P."/>
            <person name="Garnett J."/>
            <person name="Gay L."/>
            <person name="Ghori M.R.J."/>
            <person name="Gibson R."/>
            <person name="Gilby L.M."/>
            <person name="Gillett W."/>
            <person name="Glithero R.J."/>
            <person name="Grafham D.V."/>
            <person name="Griffiths C."/>
            <person name="Griffiths-Jones S."/>
            <person name="Grocock R."/>
            <person name="Hammond S."/>
            <person name="Harrison E.S.I."/>
            <person name="Hart E."/>
            <person name="Haugen E."/>
            <person name="Heath P.D."/>
            <person name="Holmes S."/>
            <person name="Holt K."/>
            <person name="Howden P.J."/>
            <person name="Hunt A.R."/>
            <person name="Hunt S.E."/>
            <person name="Hunter G."/>
            <person name="Isherwood J."/>
            <person name="James R."/>
            <person name="Johnson C."/>
            <person name="Johnson D."/>
            <person name="Joy A."/>
            <person name="Kay M."/>
            <person name="Kershaw J.K."/>
            <person name="Kibukawa M."/>
            <person name="Kimberley A.M."/>
            <person name="King A."/>
            <person name="Knights A.J."/>
            <person name="Lad H."/>
            <person name="Laird G."/>
            <person name="Lawlor S."/>
            <person name="Leongamornlert D.A."/>
            <person name="Lloyd D.M."/>
            <person name="Loveland J."/>
            <person name="Lovell J."/>
            <person name="Lush M.J."/>
            <person name="Lyne R."/>
            <person name="Martin S."/>
            <person name="Mashreghi-Mohammadi M."/>
            <person name="Matthews L."/>
            <person name="Matthews N.S.W."/>
            <person name="McLaren S."/>
            <person name="Milne S."/>
            <person name="Mistry S."/>
            <person name="Moore M.J.F."/>
            <person name="Nickerson T."/>
            <person name="O'Dell C.N."/>
            <person name="Oliver K."/>
            <person name="Palmeiri A."/>
            <person name="Palmer S.A."/>
            <person name="Parker A."/>
            <person name="Patel D."/>
            <person name="Pearce A.V."/>
            <person name="Peck A.I."/>
            <person name="Pelan S."/>
            <person name="Phelps K."/>
            <person name="Phillimore B.J."/>
            <person name="Plumb R."/>
            <person name="Rajan J."/>
            <person name="Raymond C."/>
            <person name="Rouse G."/>
            <person name="Saenphimmachak C."/>
            <person name="Sehra H.K."/>
            <person name="Sheridan E."/>
            <person name="Shownkeen R."/>
            <person name="Sims S."/>
            <person name="Skuce C.D."/>
            <person name="Smith M."/>
            <person name="Steward C."/>
            <person name="Subramanian S."/>
            <person name="Sycamore N."/>
            <person name="Tracey A."/>
            <person name="Tromans A."/>
            <person name="Van Helmond Z."/>
            <person name="Wall M."/>
            <person name="Wallis J.M."/>
            <person name="White S."/>
            <person name="Whitehead S.L."/>
            <person name="Wilkinson J.E."/>
            <person name="Willey D.L."/>
            <person name="Williams H."/>
            <person name="Wilming L."/>
            <person name="Wray P.W."/>
            <person name="Wu Z."/>
            <person name="Coulson A."/>
            <person name="Vaudin M."/>
            <person name="Sulston J.E."/>
            <person name="Durbin R.M."/>
            <person name="Hubbard T."/>
            <person name="Wooster R."/>
            <person name="Dunham I."/>
            <person name="Carter N.P."/>
            <person name="McVean G."/>
            <person name="Ross M.T."/>
            <person name="Harrow J."/>
            <person name="Olson M.V."/>
            <person name="Beck S."/>
            <person name="Rogers J."/>
            <person name="Bentley D.R."/>
        </authorList>
    </citation>
    <scope>NUCLEOTIDE SEQUENCE [LARGE SCALE GENOMIC DNA]</scope>
</reference>
<reference key="2">
    <citation type="journal article" date="2004" name="Genome Res.">
        <title>The status, quality, and expansion of the NIH full-length cDNA project: the Mammalian Gene Collection (MGC).</title>
        <authorList>
            <consortium name="The MGC Project Team"/>
        </authorList>
    </citation>
    <scope>NUCLEOTIDE SEQUENCE [LARGE SCALE MRNA]</scope>
    <source>
        <tissue>Placenta</tissue>
    </source>
</reference>
<reference key="3">
    <citation type="journal article" date="2018" name="Exp. Mol. Med.">
        <title>FAM46B inhibits cell proliferation and cell cycle progression in prostate cancer through ubiquitination of beta-catenin.</title>
        <authorList>
            <person name="Liang T."/>
            <person name="Ye X."/>
            <person name="Liu Y."/>
            <person name="Qiu X."/>
            <person name="Li Z."/>
            <person name="Tian B."/>
            <person name="Yan D."/>
        </authorList>
    </citation>
    <scope>FUNCTION</scope>
</reference>
<reference key="4">
    <citation type="journal article" date="2020" name="Nucleic Acids Res.">
        <title>FAM46B is a prokaryotic-like cytoplasmic poly(A) polymerase essential in human embryonic stem cells.</title>
        <authorList>
            <person name="Hu J.L."/>
            <person name="Liang H."/>
            <person name="Zhang H."/>
            <person name="Yang M.Z."/>
            <person name="Sun W."/>
            <person name="Zhang P."/>
            <person name="Luo L."/>
            <person name="Feng J.X."/>
            <person name="Bai H."/>
            <person name="Liu F."/>
            <person name="Zhang T."/>
            <person name="Yang J.Y."/>
            <person name="Gao Q."/>
            <person name="Long Y."/>
            <person name="Ma X.Y."/>
            <person name="Chen Y."/>
            <person name="Zhong Q."/>
            <person name="Yu B."/>
            <person name="Liao S."/>
            <person name="Wang Y."/>
            <person name="Zhao Y."/>
            <person name="Zeng M.S."/>
            <person name="Cao N."/>
            <person name="Wang J."/>
            <person name="Chen W."/>
            <person name="Yang H.T."/>
            <person name="Gao S."/>
        </authorList>
    </citation>
    <scope>FUNCTION</scope>
    <scope>CATALYTIC ACTIVITY</scope>
    <scope>MUTAGENESIS OF GLY-108; SER-109; LYS-124; ASP-125; ASP-127; LYS-176; LYS-179; CYS-181; GLU-201; LYS-203; ARG-210; GLU-213; ILE-216; ARG-269; GLU-272; ARG-275; LYS-281; ARG-303; ARG-321; HIS-330 AND PHE-331</scope>
    <scope>DEVELOPMENTAL STAGE</scope>
    <scope>SUBCELLULAR LOCATION</scope>
</reference>
<reference key="5">
    <citation type="journal article" date="2021" name="Cancer Commun. (Lond)">
        <title>Structural and functional characterization of multiple myeloma associated cytoplasmic poly(A) polymerase FAM46C.</title>
        <authorList>
            <person name="Zhang H."/>
            <person name="Zhang S.H."/>
            <person name="Hu J.L."/>
            <person name="Wu Y.T."/>
            <person name="Ma X.Y."/>
            <person name="Chen Y."/>
            <person name="Yu B."/>
            <person name="Liao S."/>
            <person name="Huang H."/>
            <person name="Gao S."/>
        </authorList>
    </citation>
    <scope>CATALYTIC ACTIVITY</scope>
    <scope>FUNCTION</scope>
</reference>
<evidence type="ECO:0000256" key="1">
    <source>
        <dbReference type="SAM" id="MobiDB-lite"/>
    </source>
</evidence>
<evidence type="ECO:0000269" key="2">
    <source>
    </source>
</evidence>
<evidence type="ECO:0000269" key="3">
    <source>
    </source>
</evidence>
<evidence type="ECO:0000269" key="4">
    <source>
    </source>
</evidence>
<evidence type="ECO:0000305" key="5"/>
<evidence type="ECO:0000305" key="6">
    <source>
    </source>
</evidence>
<evidence type="ECO:0000312" key="7">
    <source>
        <dbReference type="HGNC" id="HGNC:28273"/>
    </source>
</evidence>
<name>TET5B_HUMAN</name>
<proteinExistence type="evidence at protein level"/>